<feature type="chain" id="PRO_0000252207" description="Putative ATP-dependent RNA helicase CG14443">
    <location>
        <begin position="1"/>
        <end position="736"/>
    </location>
</feature>
<feature type="domain" description="Helicase ATP-binding" evidence="1">
    <location>
        <begin position="361"/>
        <end position="534"/>
    </location>
</feature>
<feature type="domain" description="Helicase C-terminal" evidence="2">
    <location>
        <begin position="561"/>
        <end position="719"/>
    </location>
</feature>
<feature type="region of interest" description="Disordered" evidence="3">
    <location>
        <begin position="32"/>
        <end position="58"/>
    </location>
</feature>
<feature type="region of interest" description="Disordered" evidence="3">
    <location>
        <begin position="73"/>
        <end position="166"/>
    </location>
</feature>
<feature type="region of interest" description="Disordered" evidence="3">
    <location>
        <begin position="183"/>
        <end position="237"/>
    </location>
</feature>
<feature type="region of interest" description="Disordered" evidence="3">
    <location>
        <begin position="265"/>
        <end position="296"/>
    </location>
</feature>
<feature type="short sequence motif" description="Q motif">
    <location>
        <begin position="330"/>
        <end position="358"/>
    </location>
</feature>
<feature type="short sequence motif" description="DEAD box">
    <location>
        <begin position="482"/>
        <end position="485"/>
    </location>
</feature>
<feature type="compositionally biased region" description="Low complexity" evidence="3">
    <location>
        <begin position="34"/>
        <end position="58"/>
    </location>
</feature>
<feature type="compositionally biased region" description="Low complexity" evidence="3">
    <location>
        <begin position="125"/>
        <end position="160"/>
    </location>
</feature>
<feature type="compositionally biased region" description="Basic and acidic residues" evidence="3">
    <location>
        <begin position="190"/>
        <end position="199"/>
    </location>
</feature>
<feature type="compositionally biased region" description="Polar residues" evidence="3">
    <location>
        <begin position="277"/>
        <end position="296"/>
    </location>
</feature>
<feature type="binding site" evidence="1">
    <location>
        <begin position="374"/>
        <end position="381"/>
    </location>
    <ligand>
        <name>ATP</name>
        <dbReference type="ChEBI" id="CHEBI:30616"/>
    </ligand>
</feature>
<dbReference type="EC" id="3.6.4.13"/>
<dbReference type="EMBL" id="AE014298">
    <property type="protein sequence ID" value="AAF46176.2"/>
    <property type="molecule type" value="Genomic_DNA"/>
</dbReference>
<dbReference type="RefSeq" id="NP_572330.2">
    <property type="nucleotide sequence ID" value="NM_132102.2"/>
</dbReference>
<dbReference type="SMR" id="Q9W3Y5"/>
<dbReference type="BioGRID" id="58082">
    <property type="interactions" value="4"/>
</dbReference>
<dbReference type="FunCoup" id="Q9W3Y5">
    <property type="interactions" value="120"/>
</dbReference>
<dbReference type="IntAct" id="Q9W3Y5">
    <property type="interactions" value="3"/>
</dbReference>
<dbReference type="STRING" id="7227.FBpp0300877"/>
<dbReference type="GlyGen" id="Q9W3Y5">
    <property type="glycosylation" value="1 site"/>
</dbReference>
<dbReference type="PaxDb" id="7227-FBpp0300877"/>
<dbReference type="EnsemblMetazoa" id="FBtr0308654">
    <property type="protein sequence ID" value="FBpp0300877"/>
    <property type="gene ID" value="FBgn0029880"/>
</dbReference>
<dbReference type="GeneID" id="31595"/>
<dbReference type="KEGG" id="dme:Dmel_CG14443"/>
<dbReference type="UCSC" id="CG14443-RA">
    <property type="organism name" value="d. melanogaster"/>
</dbReference>
<dbReference type="AGR" id="FB:FBgn0029880"/>
<dbReference type="FlyBase" id="FBgn0029880">
    <property type="gene designation" value="CG14443"/>
</dbReference>
<dbReference type="VEuPathDB" id="VectorBase:FBgn0029880"/>
<dbReference type="eggNOG" id="KOG0331">
    <property type="taxonomic scope" value="Eukaryota"/>
</dbReference>
<dbReference type="GeneTree" id="ENSGT00940000170749"/>
<dbReference type="HOGENOM" id="CLU_387944_0_0_1"/>
<dbReference type="InParanoid" id="Q9W3Y5"/>
<dbReference type="OMA" id="CEVISFF"/>
<dbReference type="OrthoDB" id="7871215at2759"/>
<dbReference type="PhylomeDB" id="Q9W3Y5"/>
<dbReference type="BioGRID-ORCS" id="31595">
    <property type="hits" value="0 hits in 1 CRISPR screen"/>
</dbReference>
<dbReference type="GenomeRNAi" id="31595"/>
<dbReference type="PRO" id="PR:Q9W3Y5"/>
<dbReference type="Proteomes" id="UP000000803">
    <property type="component" value="Chromosome X"/>
</dbReference>
<dbReference type="Bgee" id="FBgn0029880">
    <property type="expression patterns" value="Expressed in adult abdominal pericardial cell (Drosophila) in dorsal vessel heart and 10 other cell types or tissues"/>
</dbReference>
<dbReference type="GO" id="GO:0005737">
    <property type="term" value="C:cytoplasm"/>
    <property type="evidence" value="ECO:0000318"/>
    <property type="project" value="GO_Central"/>
</dbReference>
<dbReference type="GO" id="GO:0005634">
    <property type="term" value="C:nucleus"/>
    <property type="evidence" value="ECO:0000318"/>
    <property type="project" value="GO_Central"/>
</dbReference>
<dbReference type="GO" id="GO:1990904">
    <property type="term" value="C:ribonucleoprotein complex"/>
    <property type="evidence" value="ECO:0000318"/>
    <property type="project" value="GO_Central"/>
</dbReference>
<dbReference type="GO" id="GO:0005524">
    <property type="term" value="F:ATP binding"/>
    <property type="evidence" value="ECO:0007669"/>
    <property type="project" value="UniProtKB-KW"/>
</dbReference>
<dbReference type="GO" id="GO:0016887">
    <property type="term" value="F:ATP hydrolysis activity"/>
    <property type="evidence" value="ECO:0007669"/>
    <property type="project" value="RHEA"/>
</dbReference>
<dbReference type="GO" id="GO:0004386">
    <property type="term" value="F:helicase activity"/>
    <property type="evidence" value="ECO:0000250"/>
    <property type="project" value="FlyBase"/>
</dbReference>
<dbReference type="GO" id="GO:0003729">
    <property type="term" value="F:mRNA binding"/>
    <property type="evidence" value="ECO:0000318"/>
    <property type="project" value="GO_Central"/>
</dbReference>
<dbReference type="GO" id="GO:0003724">
    <property type="term" value="F:RNA helicase activity"/>
    <property type="evidence" value="ECO:0000318"/>
    <property type="project" value="GO_Central"/>
</dbReference>
<dbReference type="GO" id="GO:0000380">
    <property type="term" value="P:alternative mRNA splicing, via spliceosome"/>
    <property type="evidence" value="ECO:0000318"/>
    <property type="project" value="GO_Central"/>
</dbReference>
<dbReference type="GO" id="GO:0010468">
    <property type="term" value="P:regulation of gene expression"/>
    <property type="evidence" value="ECO:0007669"/>
    <property type="project" value="UniProtKB-ARBA"/>
</dbReference>
<dbReference type="CDD" id="cd18787">
    <property type="entry name" value="SF2_C_DEAD"/>
    <property type="match status" value="1"/>
</dbReference>
<dbReference type="FunFam" id="3.40.50.300:FF:001416">
    <property type="entry name" value="Tudor domain containing 12"/>
    <property type="match status" value="1"/>
</dbReference>
<dbReference type="Gene3D" id="3.40.50.300">
    <property type="entry name" value="P-loop containing nucleotide triphosphate hydrolases"/>
    <property type="match status" value="2"/>
</dbReference>
<dbReference type="InterPro" id="IPR011545">
    <property type="entry name" value="DEAD/DEAH_box_helicase_dom"/>
</dbReference>
<dbReference type="InterPro" id="IPR014001">
    <property type="entry name" value="Helicase_ATP-bd"/>
</dbReference>
<dbReference type="InterPro" id="IPR001650">
    <property type="entry name" value="Helicase_C-like"/>
</dbReference>
<dbReference type="InterPro" id="IPR027417">
    <property type="entry name" value="P-loop_NTPase"/>
</dbReference>
<dbReference type="InterPro" id="IPR014014">
    <property type="entry name" value="RNA_helicase_DEAD_Q_motif"/>
</dbReference>
<dbReference type="PANTHER" id="PTHR47958">
    <property type="entry name" value="ATP-DEPENDENT RNA HELICASE DBP3"/>
    <property type="match status" value="1"/>
</dbReference>
<dbReference type="Pfam" id="PF00270">
    <property type="entry name" value="DEAD"/>
    <property type="match status" value="1"/>
</dbReference>
<dbReference type="Pfam" id="PF00271">
    <property type="entry name" value="Helicase_C"/>
    <property type="match status" value="1"/>
</dbReference>
<dbReference type="SMART" id="SM00487">
    <property type="entry name" value="DEXDc"/>
    <property type="match status" value="1"/>
</dbReference>
<dbReference type="SMART" id="SM00490">
    <property type="entry name" value="HELICc"/>
    <property type="match status" value="1"/>
</dbReference>
<dbReference type="SUPFAM" id="SSF52540">
    <property type="entry name" value="P-loop containing nucleoside triphosphate hydrolases"/>
    <property type="match status" value="2"/>
</dbReference>
<dbReference type="PROSITE" id="PS51192">
    <property type="entry name" value="HELICASE_ATP_BIND_1"/>
    <property type="match status" value="1"/>
</dbReference>
<dbReference type="PROSITE" id="PS51194">
    <property type="entry name" value="HELICASE_CTER"/>
    <property type="match status" value="1"/>
</dbReference>
<dbReference type="PROSITE" id="PS51195">
    <property type="entry name" value="Q_MOTIF"/>
    <property type="match status" value="1"/>
</dbReference>
<keyword id="KW-0067">ATP-binding</keyword>
<keyword id="KW-0347">Helicase</keyword>
<keyword id="KW-0378">Hydrolase</keyword>
<keyword id="KW-0547">Nucleotide-binding</keyword>
<keyword id="KW-1185">Reference proteome</keyword>
<keyword id="KW-0694">RNA-binding</keyword>
<name>Y4443_DROME</name>
<evidence type="ECO:0000255" key="1">
    <source>
        <dbReference type="PROSITE-ProRule" id="PRU00541"/>
    </source>
</evidence>
<evidence type="ECO:0000255" key="2">
    <source>
        <dbReference type="PROSITE-ProRule" id="PRU00542"/>
    </source>
</evidence>
<evidence type="ECO:0000256" key="3">
    <source>
        <dbReference type="SAM" id="MobiDB-lite"/>
    </source>
</evidence>
<evidence type="ECO:0000305" key="4"/>
<organism>
    <name type="scientific">Drosophila melanogaster</name>
    <name type="common">Fruit fly</name>
    <dbReference type="NCBI Taxonomy" id="7227"/>
    <lineage>
        <taxon>Eukaryota</taxon>
        <taxon>Metazoa</taxon>
        <taxon>Ecdysozoa</taxon>
        <taxon>Arthropoda</taxon>
        <taxon>Hexapoda</taxon>
        <taxon>Insecta</taxon>
        <taxon>Pterygota</taxon>
        <taxon>Neoptera</taxon>
        <taxon>Endopterygota</taxon>
        <taxon>Diptera</taxon>
        <taxon>Brachycera</taxon>
        <taxon>Muscomorpha</taxon>
        <taxon>Ephydroidea</taxon>
        <taxon>Drosophilidae</taxon>
        <taxon>Drosophila</taxon>
        <taxon>Sophophora</taxon>
    </lineage>
</organism>
<comment type="function">
    <text>Probable ATP-binding RNA helicase.</text>
</comment>
<comment type="catalytic activity">
    <reaction>
        <text>ATP + H2O = ADP + phosphate + H(+)</text>
        <dbReference type="Rhea" id="RHEA:13065"/>
        <dbReference type="ChEBI" id="CHEBI:15377"/>
        <dbReference type="ChEBI" id="CHEBI:15378"/>
        <dbReference type="ChEBI" id="CHEBI:30616"/>
        <dbReference type="ChEBI" id="CHEBI:43474"/>
        <dbReference type="ChEBI" id="CHEBI:456216"/>
        <dbReference type="EC" id="3.6.4.13"/>
    </reaction>
</comment>
<comment type="similarity">
    <text evidence="4">Belongs to the DEAD box helicase family.</text>
</comment>
<protein>
    <recommendedName>
        <fullName>Putative ATP-dependent RNA helicase CG14443</fullName>
        <ecNumber>3.6.4.13</ecNumber>
    </recommendedName>
</protein>
<sequence>MCEKAKKLVIGNWKDNETDAEKVQKKPFLKGTKSSIWGSSASDISGQSRSLKSSSSVLSSKFVTKRLFTIQHGIEGQKPNFKIRSESFSGPHSAGGFSKSTRESRSKSRSMGNGKFRGKSHLRSSSESAHSSGSESSSSDSNSGSSSDSDSTTGSSSHGSDTGERPRMRSAVFRIHETWQSPNSFKAVKTSRENKESRSRSSSLPQKRFCPSKTQNDLTYGSPEPKSPSNRGRNSWRVGMRTPWKKSQSRSMSCSSIQKILVSRSFTRSRSPHRNTLCYQDQSKNPSRPSNYNTWKQPMDEVYNNAANYRKRHNITLTSWNMRNLPEPVLSFERSGFNATILQQLEDQGYDGPTPIQAQTWSIAKEGKNIVMISGKGTGKTLGYLLPGIMKMHNQRGLMQHKKGPIVLILVDCREAAVMVQREVLYYTNPLELRTHCLLGNSQWQGHAECDLLVASAGRLLQMIDNKKHVVELERCTYLVLDNIDRMIDVGLEGNICRLLCRLRPHAQLIVSSTSWSSNLKRMANKFLGQYTAIRVGEINNIGVRLQNIRQRVEVVNGLSKVERLMKELTAIYDTSDIPGKVVIYVKRQKVVEELVDLIRNCVPCEGIHGGRTAQENQGIIHDFGTGAYNIIVATQMTSNCLDVPGIRYVINYDFPDNIDKYVQRMSRTGCLSYNRNCEVISFFTMANYKLVTEVVDFLKICKQEIGPHLLQLAEEKMFGPRQRRRHRPQRYNRMH</sequence>
<reference key="1">
    <citation type="journal article" date="2000" name="Science">
        <title>The genome sequence of Drosophila melanogaster.</title>
        <authorList>
            <person name="Adams M.D."/>
            <person name="Celniker S.E."/>
            <person name="Holt R.A."/>
            <person name="Evans C.A."/>
            <person name="Gocayne J.D."/>
            <person name="Amanatides P.G."/>
            <person name="Scherer S.E."/>
            <person name="Li P.W."/>
            <person name="Hoskins R.A."/>
            <person name="Galle R.F."/>
            <person name="George R.A."/>
            <person name="Lewis S.E."/>
            <person name="Richards S."/>
            <person name="Ashburner M."/>
            <person name="Henderson S.N."/>
            <person name="Sutton G.G."/>
            <person name="Wortman J.R."/>
            <person name="Yandell M.D."/>
            <person name="Zhang Q."/>
            <person name="Chen L.X."/>
            <person name="Brandon R.C."/>
            <person name="Rogers Y.-H.C."/>
            <person name="Blazej R.G."/>
            <person name="Champe M."/>
            <person name="Pfeiffer B.D."/>
            <person name="Wan K.H."/>
            <person name="Doyle C."/>
            <person name="Baxter E.G."/>
            <person name="Helt G."/>
            <person name="Nelson C.R."/>
            <person name="Miklos G.L.G."/>
            <person name="Abril J.F."/>
            <person name="Agbayani A."/>
            <person name="An H.-J."/>
            <person name="Andrews-Pfannkoch C."/>
            <person name="Baldwin D."/>
            <person name="Ballew R.M."/>
            <person name="Basu A."/>
            <person name="Baxendale J."/>
            <person name="Bayraktaroglu L."/>
            <person name="Beasley E.M."/>
            <person name="Beeson K.Y."/>
            <person name="Benos P.V."/>
            <person name="Berman B.P."/>
            <person name="Bhandari D."/>
            <person name="Bolshakov S."/>
            <person name="Borkova D."/>
            <person name="Botchan M.R."/>
            <person name="Bouck J."/>
            <person name="Brokstein P."/>
            <person name="Brottier P."/>
            <person name="Burtis K.C."/>
            <person name="Busam D.A."/>
            <person name="Butler H."/>
            <person name="Cadieu E."/>
            <person name="Center A."/>
            <person name="Chandra I."/>
            <person name="Cherry J.M."/>
            <person name="Cawley S."/>
            <person name="Dahlke C."/>
            <person name="Davenport L.B."/>
            <person name="Davies P."/>
            <person name="de Pablos B."/>
            <person name="Delcher A."/>
            <person name="Deng Z."/>
            <person name="Mays A.D."/>
            <person name="Dew I."/>
            <person name="Dietz S.M."/>
            <person name="Dodson K."/>
            <person name="Doup L.E."/>
            <person name="Downes M."/>
            <person name="Dugan-Rocha S."/>
            <person name="Dunkov B.C."/>
            <person name="Dunn P."/>
            <person name="Durbin K.J."/>
            <person name="Evangelista C.C."/>
            <person name="Ferraz C."/>
            <person name="Ferriera S."/>
            <person name="Fleischmann W."/>
            <person name="Fosler C."/>
            <person name="Gabrielian A.E."/>
            <person name="Garg N.S."/>
            <person name="Gelbart W.M."/>
            <person name="Glasser K."/>
            <person name="Glodek A."/>
            <person name="Gong F."/>
            <person name="Gorrell J.H."/>
            <person name="Gu Z."/>
            <person name="Guan P."/>
            <person name="Harris M."/>
            <person name="Harris N.L."/>
            <person name="Harvey D.A."/>
            <person name="Heiman T.J."/>
            <person name="Hernandez J.R."/>
            <person name="Houck J."/>
            <person name="Hostin D."/>
            <person name="Houston K.A."/>
            <person name="Howland T.J."/>
            <person name="Wei M.-H."/>
            <person name="Ibegwam C."/>
            <person name="Jalali M."/>
            <person name="Kalush F."/>
            <person name="Karpen G.H."/>
            <person name="Ke Z."/>
            <person name="Kennison J.A."/>
            <person name="Ketchum K.A."/>
            <person name="Kimmel B.E."/>
            <person name="Kodira C.D."/>
            <person name="Kraft C.L."/>
            <person name="Kravitz S."/>
            <person name="Kulp D."/>
            <person name="Lai Z."/>
            <person name="Lasko P."/>
            <person name="Lei Y."/>
            <person name="Levitsky A.A."/>
            <person name="Li J.H."/>
            <person name="Li Z."/>
            <person name="Liang Y."/>
            <person name="Lin X."/>
            <person name="Liu X."/>
            <person name="Mattei B."/>
            <person name="McIntosh T.C."/>
            <person name="McLeod M.P."/>
            <person name="McPherson D."/>
            <person name="Merkulov G."/>
            <person name="Milshina N.V."/>
            <person name="Mobarry C."/>
            <person name="Morris J."/>
            <person name="Moshrefi A."/>
            <person name="Mount S.M."/>
            <person name="Moy M."/>
            <person name="Murphy B."/>
            <person name="Murphy L."/>
            <person name="Muzny D.M."/>
            <person name="Nelson D.L."/>
            <person name="Nelson D.R."/>
            <person name="Nelson K.A."/>
            <person name="Nixon K."/>
            <person name="Nusskern D.R."/>
            <person name="Pacleb J.M."/>
            <person name="Palazzolo M."/>
            <person name="Pittman G.S."/>
            <person name="Pan S."/>
            <person name="Pollard J."/>
            <person name="Puri V."/>
            <person name="Reese M.G."/>
            <person name="Reinert K."/>
            <person name="Remington K."/>
            <person name="Saunders R.D.C."/>
            <person name="Scheeler F."/>
            <person name="Shen H."/>
            <person name="Shue B.C."/>
            <person name="Siden-Kiamos I."/>
            <person name="Simpson M."/>
            <person name="Skupski M.P."/>
            <person name="Smith T.J."/>
            <person name="Spier E."/>
            <person name="Spradling A.C."/>
            <person name="Stapleton M."/>
            <person name="Strong R."/>
            <person name="Sun E."/>
            <person name="Svirskas R."/>
            <person name="Tector C."/>
            <person name="Turner R."/>
            <person name="Venter E."/>
            <person name="Wang A.H."/>
            <person name="Wang X."/>
            <person name="Wang Z.-Y."/>
            <person name="Wassarman D.A."/>
            <person name="Weinstock G.M."/>
            <person name="Weissenbach J."/>
            <person name="Williams S.M."/>
            <person name="Woodage T."/>
            <person name="Worley K.C."/>
            <person name="Wu D."/>
            <person name="Yang S."/>
            <person name="Yao Q.A."/>
            <person name="Ye J."/>
            <person name="Yeh R.-F."/>
            <person name="Zaveri J.S."/>
            <person name="Zhan M."/>
            <person name="Zhang G."/>
            <person name="Zhao Q."/>
            <person name="Zheng L."/>
            <person name="Zheng X.H."/>
            <person name="Zhong F.N."/>
            <person name="Zhong W."/>
            <person name="Zhou X."/>
            <person name="Zhu S.C."/>
            <person name="Zhu X."/>
            <person name="Smith H.O."/>
            <person name="Gibbs R.A."/>
            <person name="Myers E.W."/>
            <person name="Rubin G.M."/>
            <person name="Venter J.C."/>
        </authorList>
    </citation>
    <scope>NUCLEOTIDE SEQUENCE [LARGE SCALE GENOMIC DNA]</scope>
    <source>
        <strain>Berkeley</strain>
    </source>
</reference>
<reference key="2">
    <citation type="journal article" date="2002" name="Genome Biol.">
        <title>Annotation of the Drosophila melanogaster euchromatic genome: a systematic review.</title>
        <authorList>
            <person name="Misra S."/>
            <person name="Crosby M.A."/>
            <person name="Mungall C.J."/>
            <person name="Matthews B.B."/>
            <person name="Campbell K.S."/>
            <person name="Hradecky P."/>
            <person name="Huang Y."/>
            <person name="Kaminker J.S."/>
            <person name="Millburn G.H."/>
            <person name="Prochnik S.E."/>
            <person name="Smith C.D."/>
            <person name="Tupy J.L."/>
            <person name="Whitfield E.J."/>
            <person name="Bayraktaroglu L."/>
            <person name="Berman B.P."/>
            <person name="Bettencourt B.R."/>
            <person name="Celniker S.E."/>
            <person name="de Grey A.D.N.J."/>
            <person name="Drysdale R.A."/>
            <person name="Harris N.L."/>
            <person name="Richter J."/>
            <person name="Russo S."/>
            <person name="Schroeder A.J."/>
            <person name="Shu S.Q."/>
            <person name="Stapleton M."/>
            <person name="Yamada C."/>
            <person name="Ashburner M."/>
            <person name="Gelbart W.M."/>
            <person name="Rubin G.M."/>
            <person name="Lewis S.E."/>
        </authorList>
    </citation>
    <scope>GENOME REANNOTATION</scope>
    <source>
        <strain>Berkeley</strain>
    </source>
</reference>
<gene>
    <name type="ORF">CG14443</name>
</gene>
<proteinExistence type="inferred from homology"/>
<accession>Q9W3Y5</accession>